<comment type="function">
    <text evidence="1">Usually encoded in the trnK tRNA gene intron. Probably assists in splicing its own and other chloroplast group II introns.</text>
</comment>
<comment type="subcellular location">
    <subcellularLocation>
        <location>Plastid</location>
        <location>Chloroplast</location>
    </subcellularLocation>
</comment>
<comment type="similarity">
    <text evidence="1">Belongs to the intron maturase 2 family. MatK subfamily.</text>
</comment>
<protein>
    <recommendedName>
        <fullName evidence="1">Maturase K</fullName>
    </recommendedName>
    <alternativeName>
        <fullName evidence="1">Intron maturase</fullName>
    </alternativeName>
</protein>
<keyword id="KW-0150">Chloroplast</keyword>
<keyword id="KW-0507">mRNA processing</keyword>
<keyword id="KW-0934">Plastid</keyword>
<keyword id="KW-0694">RNA-binding</keyword>
<keyword id="KW-0819">tRNA processing</keyword>
<evidence type="ECO:0000255" key="1">
    <source>
        <dbReference type="HAMAP-Rule" id="MF_01390"/>
    </source>
</evidence>
<accession>Q7YKQ5</accession>
<gene>
    <name evidence="1" type="primary">matK</name>
</gene>
<dbReference type="EMBL" id="AF531775">
    <property type="protein sequence ID" value="AAP87835.1"/>
    <property type="molecule type" value="Genomic_DNA"/>
</dbReference>
<dbReference type="GO" id="GO:0009507">
    <property type="term" value="C:chloroplast"/>
    <property type="evidence" value="ECO:0007669"/>
    <property type="project" value="UniProtKB-SubCell"/>
</dbReference>
<dbReference type="GO" id="GO:0003723">
    <property type="term" value="F:RNA binding"/>
    <property type="evidence" value="ECO:0007669"/>
    <property type="project" value="UniProtKB-KW"/>
</dbReference>
<dbReference type="GO" id="GO:0006397">
    <property type="term" value="P:mRNA processing"/>
    <property type="evidence" value="ECO:0007669"/>
    <property type="project" value="UniProtKB-KW"/>
</dbReference>
<dbReference type="GO" id="GO:0008380">
    <property type="term" value="P:RNA splicing"/>
    <property type="evidence" value="ECO:0007669"/>
    <property type="project" value="UniProtKB-UniRule"/>
</dbReference>
<dbReference type="GO" id="GO:0008033">
    <property type="term" value="P:tRNA processing"/>
    <property type="evidence" value="ECO:0007669"/>
    <property type="project" value="UniProtKB-KW"/>
</dbReference>
<dbReference type="HAMAP" id="MF_01390">
    <property type="entry name" value="MatK"/>
    <property type="match status" value="1"/>
</dbReference>
<dbReference type="InterPro" id="IPR024937">
    <property type="entry name" value="Domain_X"/>
</dbReference>
<dbReference type="InterPro" id="IPR002866">
    <property type="entry name" value="Maturase_MatK"/>
</dbReference>
<dbReference type="InterPro" id="IPR024942">
    <property type="entry name" value="Maturase_MatK_N"/>
</dbReference>
<dbReference type="PANTHER" id="PTHR34811">
    <property type="entry name" value="MATURASE K"/>
    <property type="match status" value="1"/>
</dbReference>
<dbReference type="PANTHER" id="PTHR34811:SF1">
    <property type="entry name" value="MATURASE K"/>
    <property type="match status" value="1"/>
</dbReference>
<dbReference type="Pfam" id="PF01348">
    <property type="entry name" value="Intron_maturas2"/>
    <property type="match status" value="1"/>
</dbReference>
<dbReference type="Pfam" id="PF01824">
    <property type="entry name" value="MatK_N"/>
    <property type="match status" value="1"/>
</dbReference>
<organism>
    <name type="scientific">Campsis radicans</name>
    <name type="common">Trumpet creeper</name>
    <name type="synonym">Bignonia radicans</name>
    <dbReference type="NCBI Taxonomy" id="83937"/>
    <lineage>
        <taxon>Eukaryota</taxon>
        <taxon>Viridiplantae</taxon>
        <taxon>Streptophyta</taxon>
        <taxon>Embryophyta</taxon>
        <taxon>Tracheophyta</taxon>
        <taxon>Spermatophyta</taxon>
        <taxon>Magnoliopsida</taxon>
        <taxon>eudicotyledons</taxon>
        <taxon>Gunneridae</taxon>
        <taxon>Pentapetalae</taxon>
        <taxon>asterids</taxon>
        <taxon>lamiids</taxon>
        <taxon>Lamiales</taxon>
        <taxon>Bignoniaceae</taxon>
        <taxon>Tecomeae</taxon>
        <taxon>Campsis</taxon>
    </lineage>
</organism>
<geneLocation type="chloroplast"/>
<reference key="1">
    <citation type="journal article" date="2004" name="Plant Biol.">
        <title>Evolution of carnivory in lentibulariaceae and the Lamiales.</title>
        <authorList>
            <person name="Mueller K.F."/>
            <person name="Borsch T."/>
            <person name="Legendre L."/>
            <person name="Porembski S."/>
            <person name="Theisen I."/>
            <person name="Barthlott W."/>
        </authorList>
    </citation>
    <scope>NUCLEOTIDE SEQUENCE [GENOMIC DNA]</scope>
</reference>
<feature type="chain" id="PRO_0000143305" description="Maturase K">
    <location>
        <begin position="1"/>
        <end position="511"/>
    </location>
</feature>
<proteinExistence type="inferred from homology"/>
<sequence>MEEIQRYLQLERSHHQDFLYPLIFQEYIYAFAHDRGFSRSILSENPGYDNKFSLLIVKRLITRMYQQNHFLISSNDYDSNQNLFWARNKNFDFQIISEGFAFIVEIPFYLRLISCLEGKKIVKSQNLRSIHSIFPFLEDNFSHLNFVLDIGIPHPVHVEILVQILRYWVKDPSSLHLLRFLLNEYCNWTSLITPKKASSSFSKRNQRLFLFLYNSHVCEYESVFVFLRNQSSHLRSTSSGVLLERIYFYGKIESLVNVFGKVKDFQANLWLVKEPCMHYIRYQRKSLLASKGTSLFMNKWKCYLVTFWQWHFSLWFHPRRIYINQLSNYSLEFLGYLSNVRINPSVVRSQIVEKSFLINNAIKKFDTLVPIIPLIASLAKGKFCNVLGHPISKPVRADLSDSNIIDRFGRICRNLSHYHSGSSKKKNLYRIKYILRLSCARTLARKHKSTVRAFLKRLGSELLEEFLMSEEDVLYLTLPKASSALWGVYRSRIWYLDIISINDLANHKSKL</sequence>
<name>MATK_CAMRA</name>